<proteinExistence type="inferred from homology"/>
<protein>
    <recommendedName>
        <fullName evidence="1">Elongation factor Ts</fullName>
        <shortName evidence="1">EF-Ts</shortName>
    </recommendedName>
</protein>
<sequence>MADITAALVKELRERTGAGMMECKKALVEAQGDIELAIDNMRKSGQAKAAKKAGRVAAEGVILTKIAQDGKYGVIIELNCETDFVAKDGGFKAFGDEVITAALNERITDVEALKAKFEEQRTALVAKISENINIRRLGVLEGGVLGSYLHGARIGVMVSAAGADEELVKHVAMHIAASKPEYVNADDVPADVVAREHQIQLDIAMQSGKPREIAEKMVEGRMRKFTGEISLTGQHFVMDPSKTVGQLLGEHGAKINNFIRFEVGEGIEKAEVDFAAEVAAMGKQF</sequence>
<evidence type="ECO:0000255" key="1">
    <source>
        <dbReference type="HAMAP-Rule" id="MF_00050"/>
    </source>
</evidence>
<keyword id="KW-0963">Cytoplasm</keyword>
<keyword id="KW-0251">Elongation factor</keyword>
<keyword id="KW-0648">Protein biosynthesis</keyword>
<comment type="function">
    <text evidence="1">Associates with the EF-Tu.GDP complex and induces the exchange of GDP to GTP. It remains bound to the aminoacyl-tRNA.EF-Tu.GTP complex up to the GTP hydrolysis stage on the ribosome.</text>
</comment>
<comment type="subcellular location">
    <subcellularLocation>
        <location evidence="1">Cytoplasm</location>
    </subcellularLocation>
</comment>
<comment type="similarity">
    <text evidence="1">Belongs to the EF-Ts family.</text>
</comment>
<name>EFTS_SODGM</name>
<organism>
    <name type="scientific">Sodalis glossinidius (strain morsitans)</name>
    <dbReference type="NCBI Taxonomy" id="343509"/>
    <lineage>
        <taxon>Bacteria</taxon>
        <taxon>Pseudomonadati</taxon>
        <taxon>Pseudomonadota</taxon>
        <taxon>Gammaproteobacteria</taxon>
        <taxon>Enterobacterales</taxon>
        <taxon>Bruguierivoracaceae</taxon>
        <taxon>Sodalis</taxon>
    </lineage>
</organism>
<feature type="chain" id="PRO_0000241530" description="Elongation factor Ts">
    <location>
        <begin position="1"/>
        <end position="285"/>
    </location>
</feature>
<feature type="region of interest" description="Involved in Mg(2+) ion dislocation from EF-Tu" evidence="1">
    <location>
        <begin position="82"/>
        <end position="85"/>
    </location>
</feature>
<accession>Q2NRK8</accession>
<dbReference type="EMBL" id="AP008232">
    <property type="protein sequence ID" value="BAE75217.1"/>
    <property type="molecule type" value="Genomic_DNA"/>
</dbReference>
<dbReference type="RefSeq" id="WP_011411673.1">
    <property type="nucleotide sequence ID" value="NC_007712.1"/>
</dbReference>
<dbReference type="SMR" id="Q2NRK8"/>
<dbReference type="STRING" id="343509.SG1942"/>
<dbReference type="KEGG" id="sgl:SG1942"/>
<dbReference type="eggNOG" id="COG0264">
    <property type="taxonomic scope" value="Bacteria"/>
</dbReference>
<dbReference type="HOGENOM" id="CLU_047155_0_2_6"/>
<dbReference type="OrthoDB" id="9808348at2"/>
<dbReference type="Proteomes" id="UP000001932">
    <property type="component" value="Chromosome"/>
</dbReference>
<dbReference type="GO" id="GO:0005737">
    <property type="term" value="C:cytoplasm"/>
    <property type="evidence" value="ECO:0007669"/>
    <property type="project" value="UniProtKB-SubCell"/>
</dbReference>
<dbReference type="GO" id="GO:0003746">
    <property type="term" value="F:translation elongation factor activity"/>
    <property type="evidence" value="ECO:0007669"/>
    <property type="project" value="UniProtKB-UniRule"/>
</dbReference>
<dbReference type="CDD" id="cd14275">
    <property type="entry name" value="UBA_EF-Ts"/>
    <property type="match status" value="1"/>
</dbReference>
<dbReference type="FunFam" id="1.10.286.20:FF:000001">
    <property type="entry name" value="Elongation factor Ts"/>
    <property type="match status" value="1"/>
</dbReference>
<dbReference type="FunFam" id="1.10.8.10:FF:000001">
    <property type="entry name" value="Elongation factor Ts"/>
    <property type="match status" value="1"/>
</dbReference>
<dbReference type="FunFam" id="3.30.479.20:FF:000001">
    <property type="entry name" value="Elongation factor Ts"/>
    <property type="match status" value="1"/>
</dbReference>
<dbReference type="Gene3D" id="1.10.286.20">
    <property type="match status" value="1"/>
</dbReference>
<dbReference type="Gene3D" id="1.10.8.10">
    <property type="entry name" value="DNA helicase RuvA subunit, C-terminal domain"/>
    <property type="match status" value="1"/>
</dbReference>
<dbReference type="Gene3D" id="3.30.479.20">
    <property type="entry name" value="Elongation factor Ts, dimerisation domain"/>
    <property type="match status" value="2"/>
</dbReference>
<dbReference type="HAMAP" id="MF_00050">
    <property type="entry name" value="EF_Ts"/>
    <property type="match status" value="1"/>
</dbReference>
<dbReference type="InterPro" id="IPR036402">
    <property type="entry name" value="EF-Ts_dimer_sf"/>
</dbReference>
<dbReference type="InterPro" id="IPR001816">
    <property type="entry name" value="Transl_elong_EFTs/EF1B"/>
</dbReference>
<dbReference type="InterPro" id="IPR014039">
    <property type="entry name" value="Transl_elong_EFTs/EF1B_dimer"/>
</dbReference>
<dbReference type="InterPro" id="IPR018101">
    <property type="entry name" value="Transl_elong_Ts_CS"/>
</dbReference>
<dbReference type="InterPro" id="IPR009060">
    <property type="entry name" value="UBA-like_sf"/>
</dbReference>
<dbReference type="NCBIfam" id="TIGR00116">
    <property type="entry name" value="tsf"/>
    <property type="match status" value="1"/>
</dbReference>
<dbReference type="PANTHER" id="PTHR11741">
    <property type="entry name" value="ELONGATION FACTOR TS"/>
    <property type="match status" value="1"/>
</dbReference>
<dbReference type="PANTHER" id="PTHR11741:SF0">
    <property type="entry name" value="ELONGATION FACTOR TS, MITOCHONDRIAL"/>
    <property type="match status" value="1"/>
</dbReference>
<dbReference type="Pfam" id="PF00889">
    <property type="entry name" value="EF_TS"/>
    <property type="match status" value="1"/>
</dbReference>
<dbReference type="SUPFAM" id="SSF54713">
    <property type="entry name" value="Elongation factor Ts (EF-Ts), dimerisation domain"/>
    <property type="match status" value="2"/>
</dbReference>
<dbReference type="SUPFAM" id="SSF46934">
    <property type="entry name" value="UBA-like"/>
    <property type="match status" value="1"/>
</dbReference>
<dbReference type="PROSITE" id="PS01126">
    <property type="entry name" value="EF_TS_1"/>
    <property type="match status" value="1"/>
</dbReference>
<dbReference type="PROSITE" id="PS01127">
    <property type="entry name" value="EF_TS_2"/>
    <property type="match status" value="1"/>
</dbReference>
<reference key="1">
    <citation type="journal article" date="2006" name="Genome Res.">
        <title>Massive genome erosion and functional adaptations provide insights into the symbiotic lifestyle of Sodalis glossinidius in the tsetse host.</title>
        <authorList>
            <person name="Toh H."/>
            <person name="Weiss B.L."/>
            <person name="Perkin S.A.H."/>
            <person name="Yamashita A."/>
            <person name="Oshima K."/>
            <person name="Hattori M."/>
            <person name="Aksoy S."/>
        </authorList>
    </citation>
    <scope>NUCLEOTIDE SEQUENCE [LARGE SCALE GENOMIC DNA]</scope>
    <source>
        <strain>morsitans</strain>
    </source>
</reference>
<gene>
    <name evidence="1" type="primary">tsf</name>
    <name type="ordered locus">SG1942</name>
</gene>